<gene>
    <name type="primary">HBB1</name>
</gene>
<name>HBB1_TORMA</name>
<comment type="function">
    <text>Involved in oxygen transport from the lung to the various peripheral tissues.</text>
</comment>
<comment type="subunit">
    <text>Heterotetramer of two alpha chains and two beta chains.</text>
</comment>
<comment type="tissue specificity">
    <text>Red blood cells.</text>
</comment>
<comment type="similarity">
    <text evidence="1">Belongs to the globin family.</text>
</comment>
<proteinExistence type="evidence at protein level"/>
<keyword id="KW-0903">Direct protein sequencing</keyword>
<keyword id="KW-0349">Heme</keyword>
<keyword id="KW-0408">Iron</keyword>
<keyword id="KW-0479">Metal-binding</keyword>
<keyword id="KW-0561">Oxygen transport</keyword>
<keyword id="KW-0813">Transport</keyword>
<feature type="chain" id="PRO_0000053131" description="Hemoglobin subunit beta-1">
    <location>
        <begin position="1"/>
        <end position="142"/>
    </location>
</feature>
<feature type="domain" description="Globin" evidence="1">
    <location>
        <begin position="2"/>
        <end position="142"/>
    </location>
</feature>
<feature type="binding site" description="distal binding residue" evidence="1">
    <location>
        <position position="59"/>
    </location>
    <ligand>
        <name>heme b</name>
        <dbReference type="ChEBI" id="CHEBI:60344"/>
    </ligand>
    <ligandPart>
        <name>Fe</name>
        <dbReference type="ChEBI" id="CHEBI:18248"/>
    </ligandPart>
</feature>
<feature type="binding site" description="proximal binding residue" evidence="1">
    <location>
        <position position="88"/>
    </location>
    <ligand>
        <name>heme b</name>
        <dbReference type="ChEBI" id="CHEBI:60344"/>
    </ligand>
    <ligandPart>
        <name>Fe</name>
        <dbReference type="ChEBI" id="CHEBI:18248"/>
    </ligandPart>
</feature>
<dbReference type="SMR" id="P20246"/>
<dbReference type="GO" id="GO:0072562">
    <property type="term" value="C:blood microparticle"/>
    <property type="evidence" value="ECO:0007669"/>
    <property type="project" value="TreeGrafter"/>
</dbReference>
<dbReference type="GO" id="GO:0031838">
    <property type="term" value="C:haptoglobin-hemoglobin complex"/>
    <property type="evidence" value="ECO:0007669"/>
    <property type="project" value="TreeGrafter"/>
</dbReference>
<dbReference type="GO" id="GO:0005833">
    <property type="term" value="C:hemoglobin complex"/>
    <property type="evidence" value="ECO:0007669"/>
    <property type="project" value="InterPro"/>
</dbReference>
<dbReference type="GO" id="GO:0031720">
    <property type="term" value="F:haptoglobin binding"/>
    <property type="evidence" value="ECO:0007669"/>
    <property type="project" value="TreeGrafter"/>
</dbReference>
<dbReference type="GO" id="GO:0020037">
    <property type="term" value="F:heme binding"/>
    <property type="evidence" value="ECO:0007669"/>
    <property type="project" value="InterPro"/>
</dbReference>
<dbReference type="GO" id="GO:0046872">
    <property type="term" value="F:metal ion binding"/>
    <property type="evidence" value="ECO:0007669"/>
    <property type="project" value="UniProtKB-KW"/>
</dbReference>
<dbReference type="GO" id="GO:0043177">
    <property type="term" value="F:organic acid binding"/>
    <property type="evidence" value="ECO:0007669"/>
    <property type="project" value="TreeGrafter"/>
</dbReference>
<dbReference type="GO" id="GO:0019825">
    <property type="term" value="F:oxygen binding"/>
    <property type="evidence" value="ECO:0007669"/>
    <property type="project" value="InterPro"/>
</dbReference>
<dbReference type="GO" id="GO:0005344">
    <property type="term" value="F:oxygen carrier activity"/>
    <property type="evidence" value="ECO:0007669"/>
    <property type="project" value="UniProtKB-KW"/>
</dbReference>
<dbReference type="GO" id="GO:0004601">
    <property type="term" value="F:peroxidase activity"/>
    <property type="evidence" value="ECO:0007669"/>
    <property type="project" value="TreeGrafter"/>
</dbReference>
<dbReference type="GO" id="GO:0042744">
    <property type="term" value="P:hydrogen peroxide catabolic process"/>
    <property type="evidence" value="ECO:0007669"/>
    <property type="project" value="TreeGrafter"/>
</dbReference>
<dbReference type="CDD" id="cd08925">
    <property type="entry name" value="Hb-beta-like"/>
    <property type="match status" value="1"/>
</dbReference>
<dbReference type="Gene3D" id="1.10.490.10">
    <property type="entry name" value="Globins"/>
    <property type="match status" value="1"/>
</dbReference>
<dbReference type="InterPro" id="IPR000971">
    <property type="entry name" value="Globin"/>
</dbReference>
<dbReference type="InterPro" id="IPR009050">
    <property type="entry name" value="Globin-like_sf"/>
</dbReference>
<dbReference type="InterPro" id="IPR012292">
    <property type="entry name" value="Globin/Proto"/>
</dbReference>
<dbReference type="InterPro" id="IPR002337">
    <property type="entry name" value="Hemoglobin_b"/>
</dbReference>
<dbReference type="InterPro" id="IPR050056">
    <property type="entry name" value="Hemoglobin_oxygen_transport"/>
</dbReference>
<dbReference type="PANTHER" id="PTHR11442">
    <property type="entry name" value="HEMOGLOBIN FAMILY MEMBER"/>
    <property type="match status" value="1"/>
</dbReference>
<dbReference type="PANTHER" id="PTHR11442:SF7">
    <property type="entry name" value="HEMOGLOBIN SUBUNIT EPSILON"/>
    <property type="match status" value="1"/>
</dbReference>
<dbReference type="Pfam" id="PF00042">
    <property type="entry name" value="Globin"/>
    <property type="match status" value="1"/>
</dbReference>
<dbReference type="SUPFAM" id="SSF46458">
    <property type="entry name" value="Globin-like"/>
    <property type="match status" value="1"/>
</dbReference>
<dbReference type="PROSITE" id="PS01033">
    <property type="entry name" value="GLOBIN"/>
    <property type="match status" value="1"/>
</dbReference>
<evidence type="ECO:0000255" key="1">
    <source>
        <dbReference type="PROSITE-ProRule" id="PRU00238"/>
    </source>
</evidence>
<reference key="1">
    <citation type="journal article" date="1989" name="Biol. Chem. Hoppe-Seyler">
        <title>The primary structure of electric ray hemoglobin (Torpedo marmorata). Bohr effect and phosphate interaction.</title>
        <authorList>
            <person name="Huber F."/>
            <person name="Braunitzer G."/>
        </authorList>
    </citation>
    <scope>PROTEIN SEQUENCE</scope>
</reference>
<organism>
    <name type="scientific">Torpedo marmorata</name>
    <name type="common">Marbled electric ray</name>
    <dbReference type="NCBI Taxonomy" id="7788"/>
    <lineage>
        <taxon>Eukaryota</taxon>
        <taxon>Metazoa</taxon>
        <taxon>Chordata</taxon>
        <taxon>Craniata</taxon>
        <taxon>Vertebrata</taxon>
        <taxon>Chondrichthyes</taxon>
        <taxon>Elasmobranchii</taxon>
        <taxon>Batoidea</taxon>
        <taxon>Torpediniformes</taxon>
        <taxon>Torpedinidae</taxon>
        <taxon>Torpedo</taxon>
    </lineage>
</organism>
<protein>
    <recommendedName>
        <fullName>Hemoglobin subunit beta-1</fullName>
    </recommendedName>
    <alternativeName>
        <fullName>Beta-1-globin</fullName>
    </alternativeName>
    <alternativeName>
        <fullName>Hemoglobin beta-1 chain</fullName>
    </alternativeName>
</protein>
<accession>P20246</accession>
<sequence length="142" mass="16131">VSLTDEEIRLIQHIWSNVNVVEITAKALERVFYVYPWTTRLFTSFNHNFKASDKQVHDHAVNVSNAISAAIGDLHDINKNFSALSTKHQKKLGVDTSNFMLLGQAFLVELAALEKDKFTPQYHKAALKLFEVVTEALSCQYH</sequence>